<reference key="1">
    <citation type="submission" date="2006-09" db="EMBL/GenBank/DDBJ databases">
        <title>Complete sequence of Rhodopseudomonas palustris BisA53.</title>
        <authorList>
            <consortium name="US DOE Joint Genome Institute"/>
            <person name="Copeland A."/>
            <person name="Lucas S."/>
            <person name="Lapidus A."/>
            <person name="Barry K."/>
            <person name="Detter J.C."/>
            <person name="Glavina del Rio T."/>
            <person name="Hammon N."/>
            <person name="Israni S."/>
            <person name="Dalin E."/>
            <person name="Tice H."/>
            <person name="Pitluck S."/>
            <person name="Chain P."/>
            <person name="Malfatti S."/>
            <person name="Shin M."/>
            <person name="Vergez L."/>
            <person name="Schmutz J."/>
            <person name="Larimer F."/>
            <person name="Land M."/>
            <person name="Hauser L."/>
            <person name="Pelletier D.A."/>
            <person name="Kyrpides N."/>
            <person name="Kim E."/>
            <person name="Harwood C.S."/>
            <person name="Oda Y."/>
            <person name="Richardson P."/>
        </authorList>
    </citation>
    <scope>NUCLEOTIDE SEQUENCE [LARGE SCALE GENOMIC DNA]</scope>
    <source>
        <strain>BisA53</strain>
    </source>
</reference>
<proteinExistence type="inferred from homology"/>
<sequence length="927" mass="103076">MSSTVLSVEPDALPRSGEDAAAIAEDARLRDDIRLLGRILGDTVRDQEGEDVFDAVERIRQTSIRFHRDNDQPARDELVELFDGLSTPATLRIVRAFSYFSHLANLAEDQNNIRQMRLQNGARPGSLVATLAHARAVGISAKELRHFFETALVSPVLTAHPTEVRRKSTMDREMEIARLLDRRERLQMTPEEIEQHEELLRRAVLTLWQTNMLRRTKLTVLDEVANGLSFYDYAFLHEVPRLHGVLEDKLNDDDGAGEELASFLRMGSWIGGDRDGNPFVTAEVMRGTLRLQSRRALRHYLDELHALGSELSIAAHLADISDELRALAENSPDTSPHRAGEPYRLAVSAIYARLAATAHRLGIDDIRAPVAESAPYAEPAELKADLDVLHRSLVANNSAVIARGRLRSLRRAVDCFGFHLASLDMRQNSAVHERTMAELIDKAMPGKSYMAMNEEARIALLAAELRSPRPLASPFVKYSEETVDELAVFRAAAEAHATFGPAAIPQCIISMTKGVSDLLEVVVLLKEVGLVDPAGRSAINVVPLFETIEDLQAAAGIMDRLLGLHDYRRLVDSRGGVQEVMLGYSDSNKDGGFVTSGWELYKAEIELLKIFEHHGVRMRLFHGRGGSVGRGGGPSYDAILAQPAGAVNGQIRITEQGEIITSKYSNPEVGRNNLEVLAAATLEASLLQPRLGAPCVGYLKAMDEISALAFKAYRGLVYETEGFEDYFWSSTVITEIATLNIGSRPASRKKTHKIEDLRAIPWVFSWAQCRLMLPGWYGFGSAVEAWVKAHPEQGMAYLQELNREWPFFRTLLSNMDMVLSKSSIAIASRYAELVADEKLRAAIFGRIKREWHSSIAALLAIMGHQRLLQGNPRLERSIRHRFPYLDPLNHVQVELLKQHRDHAVDEQALRGIQITINGISAGLRNSG</sequence>
<keyword id="KW-0120">Carbon dioxide fixation</keyword>
<keyword id="KW-0456">Lyase</keyword>
<keyword id="KW-0460">Magnesium</keyword>
<organism>
    <name type="scientific">Rhodopseudomonas palustris (strain BisA53)</name>
    <dbReference type="NCBI Taxonomy" id="316055"/>
    <lineage>
        <taxon>Bacteria</taxon>
        <taxon>Pseudomonadati</taxon>
        <taxon>Pseudomonadota</taxon>
        <taxon>Alphaproteobacteria</taxon>
        <taxon>Hyphomicrobiales</taxon>
        <taxon>Nitrobacteraceae</taxon>
        <taxon>Rhodopseudomonas</taxon>
    </lineage>
</organism>
<feature type="chain" id="PRO_1000025584" description="Phosphoenolpyruvate carboxylase">
    <location>
        <begin position="1"/>
        <end position="927"/>
    </location>
</feature>
<feature type="active site" evidence="1">
    <location>
        <position position="160"/>
    </location>
</feature>
<feature type="active site" evidence="1">
    <location>
        <position position="589"/>
    </location>
</feature>
<gene>
    <name evidence="1" type="primary">ppc</name>
    <name type="ordered locus">RPE_1791</name>
</gene>
<name>CAPP_RHOP5</name>
<dbReference type="EC" id="4.1.1.31" evidence="1"/>
<dbReference type="EMBL" id="CP000463">
    <property type="protein sequence ID" value="ABJ05739.1"/>
    <property type="molecule type" value="Genomic_DNA"/>
</dbReference>
<dbReference type="SMR" id="Q07QP5"/>
<dbReference type="STRING" id="316055.RPE_1791"/>
<dbReference type="KEGG" id="rpe:RPE_1791"/>
<dbReference type="eggNOG" id="COG2352">
    <property type="taxonomic scope" value="Bacteria"/>
</dbReference>
<dbReference type="HOGENOM" id="CLU_006557_2_0_5"/>
<dbReference type="OrthoDB" id="9768133at2"/>
<dbReference type="GO" id="GO:0005829">
    <property type="term" value="C:cytosol"/>
    <property type="evidence" value="ECO:0007669"/>
    <property type="project" value="TreeGrafter"/>
</dbReference>
<dbReference type="GO" id="GO:0000287">
    <property type="term" value="F:magnesium ion binding"/>
    <property type="evidence" value="ECO:0007669"/>
    <property type="project" value="UniProtKB-UniRule"/>
</dbReference>
<dbReference type="GO" id="GO:0008964">
    <property type="term" value="F:phosphoenolpyruvate carboxylase activity"/>
    <property type="evidence" value="ECO:0007669"/>
    <property type="project" value="UniProtKB-UniRule"/>
</dbReference>
<dbReference type="GO" id="GO:0015977">
    <property type="term" value="P:carbon fixation"/>
    <property type="evidence" value="ECO:0007669"/>
    <property type="project" value="UniProtKB-UniRule"/>
</dbReference>
<dbReference type="GO" id="GO:0006107">
    <property type="term" value="P:oxaloacetate metabolic process"/>
    <property type="evidence" value="ECO:0007669"/>
    <property type="project" value="UniProtKB-UniRule"/>
</dbReference>
<dbReference type="GO" id="GO:0006099">
    <property type="term" value="P:tricarboxylic acid cycle"/>
    <property type="evidence" value="ECO:0007669"/>
    <property type="project" value="InterPro"/>
</dbReference>
<dbReference type="Gene3D" id="1.20.1440.90">
    <property type="entry name" value="Phosphoenolpyruvate/pyruvate domain"/>
    <property type="match status" value="1"/>
</dbReference>
<dbReference type="HAMAP" id="MF_00595">
    <property type="entry name" value="PEPcase_type1"/>
    <property type="match status" value="1"/>
</dbReference>
<dbReference type="InterPro" id="IPR021135">
    <property type="entry name" value="PEP_COase"/>
</dbReference>
<dbReference type="InterPro" id="IPR022805">
    <property type="entry name" value="PEP_COase_bac/pln-type"/>
</dbReference>
<dbReference type="InterPro" id="IPR018129">
    <property type="entry name" value="PEP_COase_Lys_AS"/>
</dbReference>
<dbReference type="InterPro" id="IPR033129">
    <property type="entry name" value="PEPCASE_His_AS"/>
</dbReference>
<dbReference type="InterPro" id="IPR015813">
    <property type="entry name" value="Pyrv/PenolPyrv_kinase-like_dom"/>
</dbReference>
<dbReference type="NCBIfam" id="NF000584">
    <property type="entry name" value="PRK00009.1"/>
    <property type="match status" value="1"/>
</dbReference>
<dbReference type="PANTHER" id="PTHR30523">
    <property type="entry name" value="PHOSPHOENOLPYRUVATE CARBOXYLASE"/>
    <property type="match status" value="1"/>
</dbReference>
<dbReference type="PANTHER" id="PTHR30523:SF6">
    <property type="entry name" value="PHOSPHOENOLPYRUVATE CARBOXYLASE"/>
    <property type="match status" value="1"/>
</dbReference>
<dbReference type="Pfam" id="PF00311">
    <property type="entry name" value="PEPcase"/>
    <property type="match status" value="1"/>
</dbReference>
<dbReference type="PRINTS" id="PR00150">
    <property type="entry name" value="PEPCARBXLASE"/>
</dbReference>
<dbReference type="SUPFAM" id="SSF51621">
    <property type="entry name" value="Phosphoenolpyruvate/pyruvate domain"/>
    <property type="match status" value="1"/>
</dbReference>
<dbReference type="PROSITE" id="PS00781">
    <property type="entry name" value="PEPCASE_1"/>
    <property type="match status" value="1"/>
</dbReference>
<dbReference type="PROSITE" id="PS00393">
    <property type="entry name" value="PEPCASE_2"/>
    <property type="match status" value="1"/>
</dbReference>
<comment type="function">
    <text evidence="1">Forms oxaloacetate, a four-carbon dicarboxylic acid source for the tricarboxylic acid cycle.</text>
</comment>
<comment type="catalytic activity">
    <reaction evidence="1">
        <text>oxaloacetate + phosphate = phosphoenolpyruvate + hydrogencarbonate</text>
        <dbReference type="Rhea" id="RHEA:28370"/>
        <dbReference type="ChEBI" id="CHEBI:16452"/>
        <dbReference type="ChEBI" id="CHEBI:17544"/>
        <dbReference type="ChEBI" id="CHEBI:43474"/>
        <dbReference type="ChEBI" id="CHEBI:58702"/>
        <dbReference type="EC" id="4.1.1.31"/>
    </reaction>
</comment>
<comment type="cofactor">
    <cofactor evidence="1">
        <name>Mg(2+)</name>
        <dbReference type="ChEBI" id="CHEBI:18420"/>
    </cofactor>
</comment>
<comment type="similarity">
    <text evidence="1">Belongs to the PEPCase type 1 family.</text>
</comment>
<evidence type="ECO:0000255" key="1">
    <source>
        <dbReference type="HAMAP-Rule" id="MF_00595"/>
    </source>
</evidence>
<protein>
    <recommendedName>
        <fullName evidence="1">Phosphoenolpyruvate carboxylase</fullName>
        <shortName evidence="1">PEPC</shortName>
        <shortName evidence="1">PEPCase</shortName>
        <ecNumber evidence="1">4.1.1.31</ecNumber>
    </recommendedName>
</protein>
<accession>Q07QP5</accession>